<evidence type="ECO:0000250" key="1"/>
<evidence type="ECO:0000250" key="2">
    <source>
        <dbReference type="UniProtKB" id="P00157"/>
    </source>
</evidence>
<evidence type="ECO:0000255" key="3">
    <source>
        <dbReference type="PROSITE-ProRule" id="PRU00967"/>
    </source>
</evidence>
<evidence type="ECO:0000255" key="4">
    <source>
        <dbReference type="PROSITE-ProRule" id="PRU00968"/>
    </source>
</evidence>
<geneLocation type="mitochondrion"/>
<keyword id="KW-0249">Electron transport</keyword>
<keyword id="KW-0349">Heme</keyword>
<keyword id="KW-0408">Iron</keyword>
<keyword id="KW-0472">Membrane</keyword>
<keyword id="KW-0479">Metal-binding</keyword>
<keyword id="KW-0496">Mitochondrion</keyword>
<keyword id="KW-0999">Mitochondrion inner membrane</keyword>
<keyword id="KW-0679">Respiratory chain</keyword>
<keyword id="KW-0812">Transmembrane</keyword>
<keyword id="KW-1133">Transmembrane helix</keyword>
<keyword id="KW-0813">Transport</keyword>
<keyword id="KW-0830">Ubiquinone</keyword>
<name>CYB_ECHGY</name>
<protein>
    <recommendedName>
        <fullName>Cytochrome b</fullName>
    </recommendedName>
    <alternativeName>
        <fullName>Complex III subunit 3</fullName>
    </alternativeName>
    <alternativeName>
        <fullName>Complex III subunit III</fullName>
    </alternativeName>
    <alternativeName>
        <fullName>Cytochrome b-c1 complex subunit 3</fullName>
    </alternativeName>
    <alternativeName>
        <fullName>Ubiquinol-cytochrome-c reductase complex cytochrome b subunit</fullName>
    </alternativeName>
</protein>
<reference key="1">
    <citation type="submission" date="2001-02" db="EMBL/GenBank/DDBJ databases">
        <authorList>
            <person name="Lin Y.-H."/>
        </authorList>
    </citation>
    <scope>NUCLEOTIDE SEQUENCE [GENOMIC DNA]</scope>
</reference>
<feature type="chain" id="PRO_0000060902" description="Cytochrome b">
    <location>
        <begin position="1"/>
        <end position="380"/>
    </location>
</feature>
<feature type="transmembrane region" description="Helical" evidence="2">
    <location>
        <begin position="33"/>
        <end position="53"/>
    </location>
</feature>
<feature type="transmembrane region" description="Helical" evidence="2">
    <location>
        <begin position="77"/>
        <end position="98"/>
    </location>
</feature>
<feature type="transmembrane region" description="Helical" evidence="2">
    <location>
        <begin position="113"/>
        <end position="133"/>
    </location>
</feature>
<feature type="transmembrane region" description="Helical" evidence="2">
    <location>
        <begin position="178"/>
        <end position="198"/>
    </location>
</feature>
<feature type="transmembrane region" description="Helical" evidence="2">
    <location>
        <begin position="226"/>
        <end position="246"/>
    </location>
</feature>
<feature type="transmembrane region" description="Helical" evidence="2">
    <location>
        <begin position="288"/>
        <end position="308"/>
    </location>
</feature>
<feature type="transmembrane region" description="Helical" evidence="2">
    <location>
        <begin position="320"/>
        <end position="340"/>
    </location>
</feature>
<feature type="transmembrane region" description="Helical" evidence="2">
    <location>
        <begin position="347"/>
        <end position="367"/>
    </location>
</feature>
<feature type="binding site" description="axial binding residue" evidence="2">
    <location>
        <position position="83"/>
    </location>
    <ligand>
        <name>heme b</name>
        <dbReference type="ChEBI" id="CHEBI:60344"/>
        <label>b562</label>
    </ligand>
    <ligandPart>
        <name>Fe</name>
        <dbReference type="ChEBI" id="CHEBI:18248"/>
    </ligandPart>
</feature>
<feature type="binding site" description="axial binding residue" evidence="2">
    <location>
        <position position="97"/>
    </location>
    <ligand>
        <name>heme b</name>
        <dbReference type="ChEBI" id="CHEBI:60344"/>
        <label>b566</label>
    </ligand>
    <ligandPart>
        <name>Fe</name>
        <dbReference type="ChEBI" id="CHEBI:18248"/>
    </ligandPart>
</feature>
<feature type="binding site" description="axial binding residue" evidence="2">
    <location>
        <position position="182"/>
    </location>
    <ligand>
        <name>heme b</name>
        <dbReference type="ChEBI" id="CHEBI:60344"/>
        <label>b562</label>
    </ligand>
    <ligandPart>
        <name>Fe</name>
        <dbReference type="ChEBI" id="CHEBI:18248"/>
    </ligandPart>
</feature>
<feature type="binding site" description="axial binding residue" evidence="2">
    <location>
        <position position="196"/>
    </location>
    <ligand>
        <name>heme b</name>
        <dbReference type="ChEBI" id="CHEBI:60344"/>
        <label>b566</label>
    </ligand>
    <ligandPart>
        <name>Fe</name>
        <dbReference type="ChEBI" id="CHEBI:18248"/>
    </ligandPart>
</feature>
<feature type="binding site" evidence="2">
    <location>
        <position position="201"/>
    </location>
    <ligand>
        <name>a ubiquinone</name>
        <dbReference type="ChEBI" id="CHEBI:16389"/>
    </ligand>
</feature>
<dbReference type="EMBL" id="AF348079">
    <property type="protein sequence ID" value="AAK64232.1"/>
    <property type="molecule type" value="Genomic_DNA"/>
</dbReference>
<dbReference type="RefSeq" id="NP_127489.1">
    <property type="nucleotide sequence ID" value="NC_002808.1"/>
</dbReference>
<dbReference type="SMR" id="Q953K8"/>
<dbReference type="GeneID" id="803391"/>
<dbReference type="CTD" id="4519"/>
<dbReference type="GO" id="GO:0005743">
    <property type="term" value="C:mitochondrial inner membrane"/>
    <property type="evidence" value="ECO:0007669"/>
    <property type="project" value="UniProtKB-SubCell"/>
</dbReference>
<dbReference type="GO" id="GO:0045275">
    <property type="term" value="C:respiratory chain complex III"/>
    <property type="evidence" value="ECO:0007669"/>
    <property type="project" value="InterPro"/>
</dbReference>
<dbReference type="GO" id="GO:0046872">
    <property type="term" value="F:metal ion binding"/>
    <property type="evidence" value="ECO:0007669"/>
    <property type="project" value="UniProtKB-KW"/>
</dbReference>
<dbReference type="GO" id="GO:0008121">
    <property type="term" value="F:ubiquinol-cytochrome-c reductase activity"/>
    <property type="evidence" value="ECO:0007669"/>
    <property type="project" value="InterPro"/>
</dbReference>
<dbReference type="GO" id="GO:0006122">
    <property type="term" value="P:mitochondrial electron transport, ubiquinol to cytochrome c"/>
    <property type="evidence" value="ECO:0007669"/>
    <property type="project" value="TreeGrafter"/>
</dbReference>
<dbReference type="CDD" id="cd00290">
    <property type="entry name" value="cytochrome_b_C"/>
    <property type="match status" value="1"/>
</dbReference>
<dbReference type="CDD" id="cd00284">
    <property type="entry name" value="Cytochrome_b_N"/>
    <property type="match status" value="1"/>
</dbReference>
<dbReference type="FunFam" id="1.20.810.10:FF:000002">
    <property type="entry name" value="Cytochrome b"/>
    <property type="match status" value="1"/>
</dbReference>
<dbReference type="Gene3D" id="1.20.810.10">
    <property type="entry name" value="Cytochrome Bc1 Complex, Chain C"/>
    <property type="match status" value="1"/>
</dbReference>
<dbReference type="InterPro" id="IPR005798">
    <property type="entry name" value="Cyt_b/b6_C"/>
</dbReference>
<dbReference type="InterPro" id="IPR036150">
    <property type="entry name" value="Cyt_b/b6_C_sf"/>
</dbReference>
<dbReference type="InterPro" id="IPR005797">
    <property type="entry name" value="Cyt_b/b6_N"/>
</dbReference>
<dbReference type="InterPro" id="IPR027387">
    <property type="entry name" value="Cytb/b6-like_sf"/>
</dbReference>
<dbReference type="InterPro" id="IPR030689">
    <property type="entry name" value="Cytochrome_b"/>
</dbReference>
<dbReference type="InterPro" id="IPR048260">
    <property type="entry name" value="Cytochrome_b_C_euk/bac"/>
</dbReference>
<dbReference type="InterPro" id="IPR048259">
    <property type="entry name" value="Cytochrome_b_N_euk/bac"/>
</dbReference>
<dbReference type="InterPro" id="IPR016174">
    <property type="entry name" value="Di-haem_cyt_TM"/>
</dbReference>
<dbReference type="PANTHER" id="PTHR19271">
    <property type="entry name" value="CYTOCHROME B"/>
    <property type="match status" value="1"/>
</dbReference>
<dbReference type="PANTHER" id="PTHR19271:SF16">
    <property type="entry name" value="CYTOCHROME B"/>
    <property type="match status" value="1"/>
</dbReference>
<dbReference type="Pfam" id="PF00032">
    <property type="entry name" value="Cytochrom_B_C"/>
    <property type="match status" value="1"/>
</dbReference>
<dbReference type="Pfam" id="PF00033">
    <property type="entry name" value="Cytochrome_B"/>
    <property type="match status" value="1"/>
</dbReference>
<dbReference type="PIRSF" id="PIRSF038885">
    <property type="entry name" value="COB"/>
    <property type="match status" value="1"/>
</dbReference>
<dbReference type="SUPFAM" id="SSF81648">
    <property type="entry name" value="a domain/subunit of cytochrome bc1 complex (Ubiquinol-cytochrome c reductase)"/>
    <property type="match status" value="1"/>
</dbReference>
<dbReference type="SUPFAM" id="SSF81342">
    <property type="entry name" value="Transmembrane di-heme cytochromes"/>
    <property type="match status" value="1"/>
</dbReference>
<dbReference type="PROSITE" id="PS51003">
    <property type="entry name" value="CYTB_CTER"/>
    <property type="match status" value="1"/>
</dbReference>
<dbReference type="PROSITE" id="PS51002">
    <property type="entry name" value="CYTB_NTER"/>
    <property type="match status" value="1"/>
</dbReference>
<organism>
    <name type="scientific">Echinosorex gymnura</name>
    <name type="common">Moon rat</name>
    <dbReference type="NCBI Taxonomy" id="162630"/>
    <lineage>
        <taxon>Eukaryota</taxon>
        <taxon>Metazoa</taxon>
        <taxon>Chordata</taxon>
        <taxon>Craniata</taxon>
        <taxon>Vertebrata</taxon>
        <taxon>Euteleostomi</taxon>
        <taxon>Mammalia</taxon>
        <taxon>Eutheria</taxon>
        <taxon>Laurasiatheria</taxon>
        <taxon>Eulipotyphla</taxon>
        <taxon>Erinaceidae</taxon>
        <taxon>Galericinae</taxon>
        <taxon>Echinosorex</taxon>
    </lineage>
</organism>
<accession>Q953K8</accession>
<comment type="function">
    <text evidence="2">Component of the ubiquinol-cytochrome c reductase complex (complex III or cytochrome b-c1 complex) that is part of the mitochondrial respiratory chain. The b-c1 complex mediates electron transfer from ubiquinol to cytochrome c. Contributes to the generation of a proton gradient across the mitochondrial membrane that is then used for ATP synthesis.</text>
</comment>
<comment type="cofactor">
    <cofactor evidence="2">
        <name>heme b</name>
        <dbReference type="ChEBI" id="CHEBI:60344"/>
    </cofactor>
    <text evidence="2">Binds 2 heme b groups non-covalently.</text>
</comment>
<comment type="subunit">
    <text evidence="2">The cytochrome bc1 complex contains 11 subunits: 3 respiratory subunits (MT-CYB, CYC1 and UQCRFS1), 2 core proteins (UQCRC1 and UQCRC2) and 6 low-molecular weight proteins (UQCRH/QCR6, UQCRB/QCR7, UQCRQ/QCR8, UQCR10/QCR9, UQCR11/QCR10 and a cleavage product of UQCRFS1). This cytochrome bc1 complex then forms a dimer.</text>
</comment>
<comment type="subcellular location">
    <subcellularLocation>
        <location evidence="2">Mitochondrion inner membrane</location>
        <topology evidence="2">Multi-pass membrane protein</topology>
    </subcellularLocation>
</comment>
<comment type="miscellaneous">
    <text evidence="1">Heme 1 (or BL or b562) is low-potential and absorbs at about 562 nm, and heme 2 (or BH or b566) is high-potential and absorbs at about 566 nm.</text>
</comment>
<comment type="similarity">
    <text evidence="3 4">Belongs to the cytochrome b family.</text>
</comment>
<comment type="caution">
    <text evidence="2">The full-length protein contains only eight transmembrane helices, not nine as predicted by bioinformatics tools.</text>
</comment>
<sequence length="380" mass="42995">MTNMRKTHPLIKIINNTFIDLPTPSNISSWWNFGSLLGLCLVIQIITGLFLAMHYSSDTMMAFSSVTHICRDVNYGWLIRSLHANGASMFFICLFIHVGRGLYYGSYMMVETWNIGIILLFTVMATAFMGYVLPWGQMSFWGATVITNLLSAIPYIGTDLVQWIWGGFSVDKATLTRFFAFHFILPFIITALAGVHLLFLHESGSNNPSGLNSDSDKIPFHPYYTIKDIFGVLFLLLILLTLTLFYPDLLGDPDNFTPANPLNTPPHIKPEWYFLFAYAILRSIPNKLGGVVALVLSILILILMPLLHTAKQRSMMFRPISQCMFWLLTADLLTLTWIGGQPVEHPYIIIGQLASILYFTIILCLLPIAGLLENYMMNWK</sequence>
<gene>
    <name type="primary">MT-CYB</name>
    <name type="synonym">COB</name>
    <name type="synonym">CYTB</name>
    <name type="synonym">MTCYB</name>
</gene>
<proteinExistence type="inferred from homology"/>